<accession>Q82AA1</accession>
<name>HIS4_STRAW</name>
<organism>
    <name type="scientific">Streptomyces avermitilis (strain ATCC 31267 / DSM 46492 / JCM 5070 / NBRC 14893 / NCIMB 12804 / NRRL 8165 / MA-4680)</name>
    <dbReference type="NCBI Taxonomy" id="227882"/>
    <lineage>
        <taxon>Bacteria</taxon>
        <taxon>Bacillati</taxon>
        <taxon>Actinomycetota</taxon>
        <taxon>Actinomycetes</taxon>
        <taxon>Kitasatosporales</taxon>
        <taxon>Streptomycetaceae</taxon>
        <taxon>Streptomyces</taxon>
    </lineage>
</organism>
<comment type="function">
    <text evidence="1">Involved in both the histidine and tryptophan biosynthetic pathways.</text>
</comment>
<comment type="catalytic activity">
    <reaction evidence="1">
        <text>1-(5-phospho-beta-D-ribosyl)-5-[(5-phospho-beta-D-ribosylamino)methylideneamino]imidazole-4-carboxamide = 5-[(5-phospho-1-deoxy-D-ribulos-1-ylimino)methylamino]-1-(5-phospho-beta-D-ribosyl)imidazole-4-carboxamide</text>
        <dbReference type="Rhea" id="RHEA:15469"/>
        <dbReference type="ChEBI" id="CHEBI:58435"/>
        <dbReference type="ChEBI" id="CHEBI:58525"/>
        <dbReference type="EC" id="5.3.1.16"/>
    </reaction>
</comment>
<comment type="catalytic activity">
    <reaction evidence="1">
        <text>N-(5-phospho-beta-D-ribosyl)anthranilate = 1-(2-carboxyphenylamino)-1-deoxy-D-ribulose 5-phosphate</text>
        <dbReference type="Rhea" id="RHEA:21540"/>
        <dbReference type="ChEBI" id="CHEBI:18277"/>
        <dbReference type="ChEBI" id="CHEBI:58613"/>
        <dbReference type="EC" id="5.3.1.24"/>
    </reaction>
</comment>
<comment type="pathway">
    <text evidence="1">Amino-acid biosynthesis; L-histidine biosynthesis; L-histidine from 5-phospho-alpha-D-ribose 1-diphosphate: step 4/9.</text>
</comment>
<comment type="pathway">
    <text evidence="1">Amino-acid biosynthesis; L-tryptophan biosynthesis; L-tryptophan from chorismate: step 3/5.</text>
</comment>
<comment type="subcellular location">
    <subcellularLocation>
        <location evidence="1">Cytoplasm</location>
    </subcellularLocation>
</comment>
<comment type="similarity">
    <text evidence="1">Belongs to the HisA/HisF family.</text>
</comment>
<sequence length="242" mass="25264">MASKLELLPAVDVRDGQAVRLVHGESGTETSYGSPLEAALAWQRSGAEWLHLVDLDAAFGTGDNRALIAEVAGAMDIKVELSGGIRDDDTLAAALATGCTRVNLGTAALETPEWVAKVIAEHGDKIAVGLDVRGTTLRGRGWTRDGGDLYETLERLNSEGCARYVVTDIAKDGTLQGPNLELLRNVCAATDRPVVASGGVSSLDDLRAIAALVPLGVEGSIVGKALYAKAFTLEEALEAVAK</sequence>
<dbReference type="EC" id="5.3.1.16" evidence="1"/>
<dbReference type="EC" id="5.3.1.24" evidence="1"/>
<dbReference type="EMBL" id="BA000030">
    <property type="protein sequence ID" value="BAC73869.1"/>
    <property type="molecule type" value="Genomic_DNA"/>
</dbReference>
<dbReference type="RefSeq" id="WP_010987559.1">
    <property type="nucleotide sequence ID" value="NZ_JZJK01000089.1"/>
</dbReference>
<dbReference type="SMR" id="Q82AA1"/>
<dbReference type="GeneID" id="41543234"/>
<dbReference type="KEGG" id="sma:SAVERM_6158"/>
<dbReference type="eggNOG" id="COG0106">
    <property type="taxonomic scope" value="Bacteria"/>
</dbReference>
<dbReference type="HOGENOM" id="CLU_048577_1_1_11"/>
<dbReference type="OrthoDB" id="9807749at2"/>
<dbReference type="UniPathway" id="UPA00031">
    <property type="reaction ID" value="UER00009"/>
</dbReference>
<dbReference type="UniPathway" id="UPA00035">
    <property type="reaction ID" value="UER00042"/>
</dbReference>
<dbReference type="Proteomes" id="UP000000428">
    <property type="component" value="Chromosome"/>
</dbReference>
<dbReference type="GO" id="GO:0005737">
    <property type="term" value="C:cytoplasm"/>
    <property type="evidence" value="ECO:0007669"/>
    <property type="project" value="UniProtKB-SubCell"/>
</dbReference>
<dbReference type="GO" id="GO:0003949">
    <property type="term" value="F:1-(5-phosphoribosyl)-5-[(5-phosphoribosylamino)methylideneamino]imidazole-4-carboxamide isomerase activity"/>
    <property type="evidence" value="ECO:0007669"/>
    <property type="project" value="UniProtKB-UniRule"/>
</dbReference>
<dbReference type="GO" id="GO:0004640">
    <property type="term" value="F:phosphoribosylanthranilate isomerase activity"/>
    <property type="evidence" value="ECO:0007669"/>
    <property type="project" value="UniProtKB-UniRule"/>
</dbReference>
<dbReference type="GO" id="GO:0000105">
    <property type="term" value="P:L-histidine biosynthetic process"/>
    <property type="evidence" value="ECO:0007669"/>
    <property type="project" value="UniProtKB-UniRule"/>
</dbReference>
<dbReference type="GO" id="GO:0000162">
    <property type="term" value="P:L-tryptophan biosynthetic process"/>
    <property type="evidence" value="ECO:0007669"/>
    <property type="project" value="UniProtKB-UniRule"/>
</dbReference>
<dbReference type="CDD" id="cd04732">
    <property type="entry name" value="HisA"/>
    <property type="match status" value="1"/>
</dbReference>
<dbReference type="FunFam" id="3.20.20.70:FF:000009">
    <property type="entry name" value="1-(5-phosphoribosyl)-5-[(5-phosphoribosylamino)methylideneamino] imidazole-4-carboxamide isomerase"/>
    <property type="match status" value="1"/>
</dbReference>
<dbReference type="Gene3D" id="3.20.20.70">
    <property type="entry name" value="Aldolase class I"/>
    <property type="match status" value="1"/>
</dbReference>
<dbReference type="HAMAP" id="MF_01014">
    <property type="entry name" value="HisA"/>
    <property type="match status" value="1"/>
</dbReference>
<dbReference type="InterPro" id="IPR013785">
    <property type="entry name" value="Aldolase_TIM"/>
</dbReference>
<dbReference type="InterPro" id="IPR006062">
    <property type="entry name" value="His_biosynth"/>
</dbReference>
<dbReference type="InterPro" id="IPR010188">
    <property type="entry name" value="HisA/PriA_Actinobacteria"/>
</dbReference>
<dbReference type="InterPro" id="IPR044524">
    <property type="entry name" value="Isoase_HisA-like"/>
</dbReference>
<dbReference type="InterPro" id="IPR023016">
    <property type="entry name" value="Isoase_HisA-like_bact"/>
</dbReference>
<dbReference type="InterPro" id="IPR011060">
    <property type="entry name" value="RibuloseP-bd_barrel"/>
</dbReference>
<dbReference type="NCBIfam" id="TIGR01919">
    <property type="entry name" value="hisA-trpF"/>
    <property type="match status" value="1"/>
</dbReference>
<dbReference type="PANTHER" id="PTHR43090">
    <property type="entry name" value="1-(5-PHOSPHORIBOSYL)-5-[(5-PHOSPHORIBOSYLAMINO)METHYLIDENEAMINO] IMIDAZOLE-4-CARBOXAMIDE ISOMERASE"/>
    <property type="match status" value="1"/>
</dbReference>
<dbReference type="PANTHER" id="PTHR43090:SF2">
    <property type="entry name" value="1-(5-PHOSPHORIBOSYL)-5-[(5-PHOSPHORIBOSYLAMINO)METHYLIDENEAMINO] IMIDAZOLE-4-CARBOXAMIDE ISOMERASE"/>
    <property type="match status" value="1"/>
</dbReference>
<dbReference type="Pfam" id="PF00977">
    <property type="entry name" value="His_biosynth"/>
    <property type="match status" value="1"/>
</dbReference>
<dbReference type="SUPFAM" id="SSF51366">
    <property type="entry name" value="Ribulose-phoshate binding barrel"/>
    <property type="match status" value="1"/>
</dbReference>
<gene>
    <name evidence="1" type="primary">priA</name>
    <name evidence="1" type="synonym">hisA</name>
    <name type="ordered locus">SAV_6158</name>
</gene>
<protein>
    <recommendedName>
        <fullName evidence="1">Phosphoribosyl isomerase A</fullName>
    </recommendedName>
    <alternativeName>
        <fullName evidence="1">1-(5-phosphoribosyl)-5-[(5-phosphoribosylamino)methylideneamino] imidazole-4-carboxamide isomerase</fullName>
        <ecNumber evidence="1">5.3.1.16</ecNumber>
    </alternativeName>
    <alternativeName>
        <fullName evidence="1">N-(5'-phosphoribosyl)anthranilate isomerase</fullName>
        <shortName evidence="1">PRAI</shortName>
        <ecNumber evidence="1">5.3.1.24</ecNumber>
    </alternativeName>
    <alternativeName>
        <fullName evidence="1">Phosphoribosylformimino-5-aminoimidazole carboxamide ribotide isomerase</fullName>
    </alternativeName>
</protein>
<reference key="1">
    <citation type="journal article" date="2001" name="Proc. Natl. Acad. Sci. U.S.A.">
        <title>Genome sequence of an industrial microorganism Streptomyces avermitilis: deducing the ability of producing secondary metabolites.</title>
        <authorList>
            <person name="Omura S."/>
            <person name="Ikeda H."/>
            <person name="Ishikawa J."/>
            <person name="Hanamoto A."/>
            <person name="Takahashi C."/>
            <person name="Shinose M."/>
            <person name="Takahashi Y."/>
            <person name="Horikawa H."/>
            <person name="Nakazawa H."/>
            <person name="Osonoe T."/>
            <person name="Kikuchi H."/>
            <person name="Shiba T."/>
            <person name="Sakaki Y."/>
            <person name="Hattori M."/>
        </authorList>
    </citation>
    <scope>NUCLEOTIDE SEQUENCE [LARGE SCALE GENOMIC DNA]</scope>
    <source>
        <strain>ATCC 31267 / DSM 46492 / JCM 5070 / NBRC 14893 / NCIMB 12804 / NRRL 8165 / MA-4680</strain>
    </source>
</reference>
<reference key="2">
    <citation type="journal article" date="2003" name="Nat. Biotechnol.">
        <title>Complete genome sequence and comparative analysis of the industrial microorganism Streptomyces avermitilis.</title>
        <authorList>
            <person name="Ikeda H."/>
            <person name="Ishikawa J."/>
            <person name="Hanamoto A."/>
            <person name="Shinose M."/>
            <person name="Kikuchi H."/>
            <person name="Shiba T."/>
            <person name="Sakaki Y."/>
            <person name="Hattori M."/>
            <person name="Omura S."/>
        </authorList>
    </citation>
    <scope>NUCLEOTIDE SEQUENCE [LARGE SCALE GENOMIC DNA]</scope>
    <source>
        <strain>ATCC 31267 / DSM 46492 / JCM 5070 / NBRC 14893 / NCIMB 12804 / NRRL 8165 / MA-4680</strain>
    </source>
</reference>
<keyword id="KW-0028">Amino-acid biosynthesis</keyword>
<keyword id="KW-0057">Aromatic amino acid biosynthesis</keyword>
<keyword id="KW-0963">Cytoplasm</keyword>
<keyword id="KW-0368">Histidine biosynthesis</keyword>
<keyword id="KW-0413">Isomerase</keyword>
<keyword id="KW-1185">Reference proteome</keyword>
<keyword id="KW-0822">Tryptophan biosynthesis</keyword>
<feature type="chain" id="PRO_0000142086" description="Phosphoribosyl isomerase A">
    <location>
        <begin position="1"/>
        <end position="242"/>
    </location>
</feature>
<feature type="active site" description="Proton acceptor" evidence="1">
    <location>
        <position position="12"/>
    </location>
</feature>
<feature type="active site" description="Proton donor" evidence="1">
    <location>
        <position position="131"/>
    </location>
</feature>
<proteinExistence type="inferred from homology"/>
<evidence type="ECO:0000255" key="1">
    <source>
        <dbReference type="HAMAP-Rule" id="MF_01014"/>
    </source>
</evidence>